<protein>
    <recommendedName>
        <fullName evidence="1">DNA mismatch repair protein MutL</fullName>
    </recommendedName>
</protein>
<feature type="chain" id="PRO_1000010093" description="DNA mismatch repair protein MutL">
    <location>
        <begin position="1"/>
        <end position="660"/>
    </location>
</feature>
<feature type="region of interest" description="Disordered" evidence="2">
    <location>
        <begin position="414"/>
        <end position="433"/>
    </location>
</feature>
<organism>
    <name type="scientific">Streptococcus pyogenes serotype M5 (strain Manfredo)</name>
    <dbReference type="NCBI Taxonomy" id="160491"/>
    <lineage>
        <taxon>Bacteria</taxon>
        <taxon>Bacillati</taxon>
        <taxon>Bacillota</taxon>
        <taxon>Bacilli</taxon>
        <taxon>Lactobacillales</taxon>
        <taxon>Streptococcaceae</taxon>
        <taxon>Streptococcus</taxon>
    </lineage>
</organism>
<accession>A2RGV3</accession>
<gene>
    <name evidence="1" type="primary">mutL</name>
    <name type="ordered locus">SpyM51763</name>
</gene>
<dbReference type="EMBL" id="AM295007">
    <property type="protein sequence ID" value="CAM31085.1"/>
    <property type="molecule type" value="Genomic_DNA"/>
</dbReference>
<dbReference type="RefSeq" id="WP_011889221.1">
    <property type="nucleotide sequence ID" value="NC_009332.1"/>
</dbReference>
<dbReference type="SMR" id="A2RGV3"/>
<dbReference type="KEGG" id="spf:SpyM51763"/>
<dbReference type="HOGENOM" id="CLU_004131_4_1_9"/>
<dbReference type="GO" id="GO:0032300">
    <property type="term" value="C:mismatch repair complex"/>
    <property type="evidence" value="ECO:0007669"/>
    <property type="project" value="InterPro"/>
</dbReference>
<dbReference type="GO" id="GO:0005524">
    <property type="term" value="F:ATP binding"/>
    <property type="evidence" value="ECO:0007669"/>
    <property type="project" value="InterPro"/>
</dbReference>
<dbReference type="GO" id="GO:0016887">
    <property type="term" value="F:ATP hydrolysis activity"/>
    <property type="evidence" value="ECO:0007669"/>
    <property type="project" value="InterPro"/>
</dbReference>
<dbReference type="GO" id="GO:0140664">
    <property type="term" value="F:ATP-dependent DNA damage sensor activity"/>
    <property type="evidence" value="ECO:0007669"/>
    <property type="project" value="InterPro"/>
</dbReference>
<dbReference type="GO" id="GO:0030983">
    <property type="term" value="F:mismatched DNA binding"/>
    <property type="evidence" value="ECO:0007669"/>
    <property type="project" value="InterPro"/>
</dbReference>
<dbReference type="GO" id="GO:0006298">
    <property type="term" value="P:mismatch repair"/>
    <property type="evidence" value="ECO:0007669"/>
    <property type="project" value="UniProtKB-UniRule"/>
</dbReference>
<dbReference type="CDD" id="cd16926">
    <property type="entry name" value="HATPase_MutL-MLH-PMS-like"/>
    <property type="match status" value="1"/>
</dbReference>
<dbReference type="CDD" id="cd00782">
    <property type="entry name" value="MutL_Trans"/>
    <property type="match status" value="1"/>
</dbReference>
<dbReference type="FunFam" id="3.30.1370.100:FF:000004">
    <property type="entry name" value="DNA mismatch repair endonuclease MutL"/>
    <property type="match status" value="1"/>
</dbReference>
<dbReference type="FunFam" id="3.30.565.10:FF:000003">
    <property type="entry name" value="DNA mismatch repair endonuclease MutL"/>
    <property type="match status" value="1"/>
</dbReference>
<dbReference type="Gene3D" id="3.30.230.10">
    <property type="match status" value="1"/>
</dbReference>
<dbReference type="Gene3D" id="3.30.565.10">
    <property type="entry name" value="Histidine kinase-like ATPase, C-terminal domain"/>
    <property type="match status" value="1"/>
</dbReference>
<dbReference type="Gene3D" id="3.30.1540.20">
    <property type="entry name" value="MutL, C-terminal domain, dimerisation subdomain"/>
    <property type="match status" value="1"/>
</dbReference>
<dbReference type="Gene3D" id="3.30.1370.100">
    <property type="entry name" value="MutL, C-terminal domain, regulatory subdomain"/>
    <property type="match status" value="1"/>
</dbReference>
<dbReference type="HAMAP" id="MF_00149">
    <property type="entry name" value="DNA_mis_repair"/>
    <property type="match status" value="1"/>
</dbReference>
<dbReference type="InterPro" id="IPR014762">
    <property type="entry name" value="DNA_mismatch_repair_CS"/>
</dbReference>
<dbReference type="InterPro" id="IPR020667">
    <property type="entry name" value="DNA_mismatch_repair_MutL"/>
</dbReference>
<dbReference type="InterPro" id="IPR013507">
    <property type="entry name" value="DNA_mismatch_S5_2-like"/>
</dbReference>
<dbReference type="InterPro" id="IPR036890">
    <property type="entry name" value="HATPase_C_sf"/>
</dbReference>
<dbReference type="InterPro" id="IPR002099">
    <property type="entry name" value="MutL/Mlh/PMS"/>
</dbReference>
<dbReference type="InterPro" id="IPR038973">
    <property type="entry name" value="MutL/Mlh/Pms-like"/>
</dbReference>
<dbReference type="InterPro" id="IPR014790">
    <property type="entry name" value="MutL_C"/>
</dbReference>
<dbReference type="InterPro" id="IPR042120">
    <property type="entry name" value="MutL_C_dimsub"/>
</dbReference>
<dbReference type="InterPro" id="IPR042121">
    <property type="entry name" value="MutL_C_regsub"/>
</dbReference>
<dbReference type="InterPro" id="IPR037198">
    <property type="entry name" value="MutL_C_sf"/>
</dbReference>
<dbReference type="InterPro" id="IPR020568">
    <property type="entry name" value="Ribosomal_Su5_D2-typ_SF"/>
</dbReference>
<dbReference type="InterPro" id="IPR014721">
    <property type="entry name" value="Ribsml_uS5_D2-typ_fold_subgr"/>
</dbReference>
<dbReference type="NCBIfam" id="TIGR00585">
    <property type="entry name" value="mutl"/>
    <property type="match status" value="1"/>
</dbReference>
<dbReference type="NCBIfam" id="NF000950">
    <property type="entry name" value="PRK00095.1-3"/>
    <property type="match status" value="1"/>
</dbReference>
<dbReference type="PANTHER" id="PTHR10073">
    <property type="entry name" value="DNA MISMATCH REPAIR PROTEIN MLH, PMS, MUTL"/>
    <property type="match status" value="1"/>
</dbReference>
<dbReference type="PANTHER" id="PTHR10073:SF12">
    <property type="entry name" value="DNA MISMATCH REPAIR PROTEIN MLH1"/>
    <property type="match status" value="1"/>
</dbReference>
<dbReference type="Pfam" id="PF01119">
    <property type="entry name" value="DNA_mis_repair"/>
    <property type="match status" value="1"/>
</dbReference>
<dbReference type="Pfam" id="PF13589">
    <property type="entry name" value="HATPase_c_3"/>
    <property type="match status" value="1"/>
</dbReference>
<dbReference type="Pfam" id="PF08676">
    <property type="entry name" value="MutL_C"/>
    <property type="match status" value="1"/>
</dbReference>
<dbReference type="SMART" id="SM01340">
    <property type="entry name" value="DNA_mis_repair"/>
    <property type="match status" value="1"/>
</dbReference>
<dbReference type="SMART" id="SM00853">
    <property type="entry name" value="MutL_C"/>
    <property type="match status" value="1"/>
</dbReference>
<dbReference type="SUPFAM" id="SSF55874">
    <property type="entry name" value="ATPase domain of HSP90 chaperone/DNA topoisomerase II/histidine kinase"/>
    <property type="match status" value="1"/>
</dbReference>
<dbReference type="SUPFAM" id="SSF118116">
    <property type="entry name" value="DNA mismatch repair protein MutL"/>
    <property type="match status" value="1"/>
</dbReference>
<dbReference type="SUPFAM" id="SSF54211">
    <property type="entry name" value="Ribosomal protein S5 domain 2-like"/>
    <property type="match status" value="1"/>
</dbReference>
<dbReference type="PROSITE" id="PS00058">
    <property type="entry name" value="DNA_MISMATCH_REPAIR_1"/>
    <property type="match status" value="1"/>
</dbReference>
<keyword id="KW-0227">DNA damage</keyword>
<keyword id="KW-0234">DNA repair</keyword>
<name>MUTL_STRPG</name>
<sequence>MTNIIELPEVLANQIAAGEVVERPASVVKELVENAIDAKSSQITVEIEESGLKMIQVTDNGEGMSHEDLPLSLRRHATSKIKSQSDLFRIRTLGFRGEALPSVASISKITIKTATKEVTHGSLLIATGGEIETLEAISTPTGTKIKVENLFYNTPARLKYMKSLQAELAHIVDVVNRLSLAHPEVAFTLISDGRQLTQTSGTGDLRQAIAGIYGLNTTKKMLAISNADLDFEVSGYVSLPELTRANRNYMTILVNGRYIKNFLLNRAILDGYGSKLMVGRFPIVVIDIQIDPYLADVNVHPTKQEVRISKERELMALISTAISESLKEQDLIPDALENLAKSSTRHFSKPEQTQLPLQSRGLYYDPQKNDFFVKESAVSEKIPETDFYFGAVDNSVKVEKAELLPHSEEVIGPSSVKHASRPQNTFTETDHPNLDLKNRQKLSQMLNRLENEEKSVFPELDYFGQMHGTYLFAQGKDGLFIIDQHAAQERVKYEYYRDKIGEADSSLQQLLVPYLFEFSGSDFINLQEKMALLNEVGIFLEVYGHNTFILREHPIWMKEEEIASGVYEMCDMLLLTNEVSIKTYRAELAIMMSCKRSIKANHSLDDYSARNLLLQLAQCQNPYNCPHGRPVLINFSKADMEKMFRRIQENHTSLRELGKY</sequence>
<reference key="1">
    <citation type="journal article" date="2007" name="J. Bacteriol.">
        <title>Complete genome of acute rheumatic fever-associated serotype M5 Streptococcus pyogenes strain Manfredo.</title>
        <authorList>
            <person name="Holden M.T.G."/>
            <person name="Scott A."/>
            <person name="Cherevach I."/>
            <person name="Chillingworth T."/>
            <person name="Churcher C."/>
            <person name="Cronin A."/>
            <person name="Dowd L."/>
            <person name="Feltwell T."/>
            <person name="Hamlin N."/>
            <person name="Holroyd S."/>
            <person name="Jagels K."/>
            <person name="Moule S."/>
            <person name="Mungall K."/>
            <person name="Quail M.A."/>
            <person name="Price C."/>
            <person name="Rabbinowitsch E."/>
            <person name="Sharp S."/>
            <person name="Skelton J."/>
            <person name="Whitehead S."/>
            <person name="Barrell B.G."/>
            <person name="Kehoe M."/>
            <person name="Parkhill J."/>
        </authorList>
    </citation>
    <scope>NUCLEOTIDE SEQUENCE [LARGE SCALE GENOMIC DNA]</scope>
    <source>
        <strain>Manfredo</strain>
    </source>
</reference>
<comment type="function">
    <text evidence="1">This protein is involved in the repair of mismatches in DNA. It is required for dam-dependent methyl-directed DNA mismatch repair. May act as a 'molecular matchmaker', a protein that promotes the formation of a stable complex between two or more DNA-binding proteins in an ATP-dependent manner without itself being part of a final effector complex.</text>
</comment>
<comment type="similarity">
    <text evidence="1">Belongs to the DNA mismatch repair MutL/HexB family.</text>
</comment>
<evidence type="ECO:0000255" key="1">
    <source>
        <dbReference type="HAMAP-Rule" id="MF_00149"/>
    </source>
</evidence>
<evidence type="ECO:0000256" key="2">
    <source>
        <dbReference type="SAM" id="MobiDB-lite"/>
    </source>
</evidence>
<proteinExistence type="inferred from homology"/>